<organism>
    <name type="scientific">Bartonella quintana (strain Toulouse)</name>
    <name type="common">Rochalimaea quintana</name>
    <dbReference type="NCBI Taxonomy" id="283165"/>
    <lineage>
        <taxon>Bacteria</taxon>
        <taxon>Pseudomonadati</taxon>
        <taxon>Pseudomonadota</taxon>
        <taxon>Alphaproteobacteria</taxon>
        <taxon>Hyphomicrobiales</taxon>
        <taxon>Bartonellaceae</taxon>
        <taxon>Bartonella</taxon>
    </lineage>
</organism>
<feature type="chain" id="PRO_0000313136" description="DNA ligase">
    <location>
        <begin position="1"/>
        <end position="719"/>
    </location>
</feature>
<feature type="domain" description="BRCT" evidence="1">
    <location>
        <begin position="638"/>
        <end position="719"/>
    </location>
</feature>
<feature type="active site" description="N6-AMP-lysine intermediate" evidence="1">
    <location>
        <position position="127"/>
    </location>
</feature>
<feature type="binding site" evidence="1">
    <location>
        <begin position="42"/>
        <end position="46"/>
    </location>
    <ligand>
        <name>NAD(+)</name>
        <dbReference type="ChEBI" id="CHEBI:57540"/>
    </ligand>
</feature>
<feature type="binding site" evidence="1">
    <location>
        <begin position="91"/>
        <end position="92"/>
    </location>
    <ligand>
        <name>NAD(+)</name>
        <dbReference type="ChEBI" id="CHEBI:57540"/>
    </ligand>
</feature>
<feature type="binding site" evidence="1">
    <location>
        <position position="125"/>
    </location>
    <ligand>
        <name>NAD(+)</name>
        <dbReference type="ChEBI" id="CHEBI:57540"/>
    </ligand>
</feature>
<feature type="binding site" evidence="1">
    <location>
        <position position="148"/>
    </location>
    <ligand>
        <name>NAD(+)</name>
        <dbReference type="ChEBI" id="CHEBI:57540"/>
    </ligand>
</feature>
<feature type="binding site" evidence="1">
    <location>
        <position position="184"/>
    </location>
    <ligand>
        <name>NAD(+)</name>
        <dbReference type="ChEBI" id="CHEBI:57540"/>
    </ligand>
</feature>
<feature type="binding site" evidence="1">
    <location>
        <position position="300"/>
    </location>
    <ligand>
        <name>NAD(+)</name>
        <dbReference type="ChEBI" id="CHEBI:57540"/>
    </ligand>
</feature>
<feature type="binding site" evidence="1">
    <location>
        <position position="324"/>
    </location>
    <ligand>
        <name>NAD(+)</name>
        <dbReference type="ChEBI" id="CHEBI:57540"/>
    </ligand>
</feature>
<feature type="binding site" evidence="1">
    <location>
        <position position="429"/>
    </location>
    <ligand>
        <name>Zn(2+)</name>
        <dbReference type="ChEBI" id="CHEBI:29105"/>
    </ligand>
</feature>
<feature type="binding site" evidence="1">
    <location>
        <position position="432"/>
    </location>
    <ligand>
        <name>Zn(2+)</name>
        <dbReference type="ChEBI" id="CHEBI:29105"/>
    </ligand>
</feature>
<feature type="binding site" evidence="1">
    <location>
        <position position="447"/>
    </location>
    <ligand>
        <name>Zn(2+)</name>
        <dbReference type="ChEBI" id="CHEBI:29105"/>
    </ligand>
</feature>
<feature type="binding site" evidence="1">
    <location>
        <position position="453"/>
    </location>
    <ligand>
        <name>Zn(2+)</name>
        <dbReference type="ChEBI" id="CHEBI:29105"/>
    </ligand>
</feature>
<name>DNLJ_BARQU</name>
<gene>
    <name evidence="1" type="primary">ligA</name>
    <name type="ordered locus">BQ08760</name>
</gene>
<sequence length="719" mass="80128">MNKDEIKNLTALEAESELEWLAKEIARHDVLYNRDDQPEISDAEYDALRRRNAEIEALFPELIRSDSPSHKIGAPVSEKFEKSVHAQAMLSLDNAFSSEDICEFIVRIRRFLRLPATQILEMTAEPKIDGLSLSLRYEKGRLVCAATRGDGYIGENVTANARTISDIPKVLRGEFPDIIEVRGEVYMRRENFQALNMSQQEKGKFVFANPRNAAAGSLRQLDPRITASRKLHFFAYACGEVSETFAASQMEMMKKLKEYGFFINPLTKSFKTLEEIISYYHDIEECRHSLSYDIDGIVYKVNDLKLQMRLGFVSRSPRWAVAHKFPAEKAMALLEGIDIQVGRTGALTPVARLAPITIGGVVVTNASLHNEDYIKGIGHKGESIREGRDIRVGDTVIVQRAGDVIPQIVDIIAEKRPKGASAFVFPHLCPACGSHAVREVGESVRRCTGGLICPAQAIERIRHFVSRNAFDIEGLGKKQVEFFFHIQDEALCIHTPADIFTLQRRQEKALVRLENMEGFGTVSVRKLYNAINMRRKVPLSRFLFALGIRHIGEVNARRLAHAYQNYTAFETVAMAATMPYDKVGEEGNEAWLELTNIEGIGPQVGEAIIDFYQEAHNREVLAALLREVTPLDEENVMTASSPIAGKTIVFTGTLARMSRDEAKALAERLGAKTSGSLSKKTDLLVAGSAVGSKLAKAQGLGVEVIDEEAWLQLIEGSYI</sequence>
<comment type="function">
    <text evidence="1">DNA ligase that catalyzes the formation of phosphodiester linkages between 5'-phosphoryl and 3'-hydroxyl groups in double-stranded DNA using NAD as a coenzyme and as the energy source for the reaction. It is essential for DNA replication and repair of damaged DNA.</text>
</comment>
<comment type="catalytic activity">
    <reaction evidence="1">
        <text>NAD(+) + (deoxyribonucleotide)n-3'-hydroxyl + 5'-phospho-(deoxyribonucleotide)m = (deoxyribonucleotide)n+m + AMP + beta-nicotinamide D-nucleotide.</text>
        <dbReference type="EC" id="6.5.1.2"/>
    </reaction>
</comment>
<comment type="cofactor">
    <cofactor evidence="1">
        <name>Mg(2+)</name>
        <dbReference type="ChEBI" id="CHEBI:18420"/>
    </cofactor>
    <cofactor evidence="1">
        <name>Mn(2+)</name>
        <dbReference type="ChEBI" id="CHEBI:29035"/>
    </cofactor>
</comment>
<comment type="similarity">
    <text evidence="1">Belongs to the NAD-dependent DNA ligase family. LigA subfamily.</text>
</comment>
<keyword id="KW-0227">DNA damage</keyword>
<keyword id="KW-0234">DNA repair</keyword>
<keyword id="KW-0235">DNA replication</keyword>
<keyword id="KW-0436">Ligase</keyword>
<keyword id="KW-0460">Magnesium</keyword>
<keyword id="KW-0464">Manganese</keyword>
<keyword id="KW-0479">Metal-binding</keyword>
<keyword id="KW-0520">NAD</keyword>
<keyword id="KW-0862">Zinc</keyword>
<protein>
    <recommendedName>
        <fullName evidence="1">DNA ligase</fullName>
        <ecNumber evidence="1">6.5.1.2</ecNumber>
    </recommendedName>
    <alternativeName>
        <fullName evidence="1">Polydeoxyribonucleotide synthase [NAD(+)]</fullName>
    </alternativeName>
</protein>
<accession>Q6FZ81</accession>
<reference key="1">
    <citation type="journal article" date="2004" name="Proc. Natl. Acad. Sci. U.S.A.">
        <title>The louse-borne human pathogen Bartonella quintana is a genomic derivative of the zoonotic agent Bartonella henselae.</title>
        <authorList>
            <person name="Alsmark U.C.M."/>
            <person name="Frank A.C."/>
            <person name="Karlberg E.O."/>
            <person name="Legault B.-A."/>
            <person name="Ardell D.H."/>
            <person name="Canbaeck B."/>
            <person name="Eriksson A.-S."/>
            <person name="Naeslund A.K."/>
            <person name="Handley S.A."/>
            <person name="Huvet M."/>
            <person name="La Scola B."/>
            <person name="Holmberg M."/>
            <person name="Andersson S.G.E."/>
        </authorList>
    </citation>
    <scope>NUCLEOTIDE SEQUENCE [LARGE SCALE GENOMIC DNA]</scope>
    <source>
        <strain>Toulouse</strain>
    </source>
</reference>
<proteinExistence type="inferred from homology"/>
<evidence type="ECO:0000255" key="1">
    <source>
        <dbReference type="HAMAP-Rule" id="MF_01588"/>
    </source>
</evidence>
<dbReference type="EC" id="6.5.1.2" evidence="1"/>
<dbReference type="EMBL" id="BX897700">
    <property type="protein sequence ID" value="CAF26355.1"/>
    <property type="molecule type" value="Genomic_DNA"/>
</dbReference>
<dbReference type="RefSeq" id="WP_011179593.1">
    <property type="nucleotide sequence ID" value="NC_005955.1"/>
</dbReference>
<dbReference type="SMR" id="Q6FZ81"/>
<dbReference type="KEGG" id="bqu:BQ08760"/>
<dbReference type="eggNOG" id="COG0272">
    <property type="taxonomic scope" value="Bacteria"/>
</dbReference>
<dbReference type="HOGENOM" id="CLU_007764_2_1_5"/>
<dbReference type="OrthoDB" id="9759736at2"/>
<dbReference type="Proteomes" id="UP000000597">
    <property type="component" value="Chromosome"/>
</dbReference>
<dbReference type="GO" id="GO:0005829">
    <property type="term" value="C:cytosol"/>
    <property type="evidence" value="ECO:0007669"/>
    <property type="project" value="TreeGrafter"/>
</dbReference>
<dbReference type="GO" id="GO:0003677">
    <property type="term" value="F:DNA binding"/>
    <property type="evidence" value="ECO:0007669"/>
    <property type="project" value="InterPro"/>
</dbReference>
<dbReference type="GO" id="GO:0003911">
    <property type="term" value="F:DNA ligase (NAD+) activity"/>
    <property type="evidence" value="ECO:0007669"/>
    <property type="project" value="UniProtKB-UniRule"/>
</dbReference>
<dbReference type="GO" id="GO:0046872">
    <property type="term" value="F:metal ion binding"/>
    <property type="evidence" value="ECO:0007669"/>
    <property type="project" value="UniProtKB-KW"/>
</dbReference>
<dbReference type="GO" id="GO:0006281">
    <property type="term" value="P:DNA repair"/>
    <property type="evidence" value="ECO:0007669"/>
    <property type="project" value="UniProtKB-KW"/>
</dbReference>
<dbReference type="GO" id="GO:0006260">
    <property type="term" value="P:DNA replication"/>
    <property type="evidence" value="ECO:0007669"/>
    <property type="project" value="UniProtKB-KW"/>
</dbReference>
<dbReference type="CDD" id="cd17748">
    <property type="entry name" value="BRCT_DNA_ligase_like"/>
    <property type="match status" value="1"/>
</dbReference>
<dbReference type="CDD" id="cd00114">
    <property type="entry name" value="LIGANc"/>
    <property type="match status" value="1"/>
</dbReference>
<dbReference type="FunFam" id="3.30.470.30:FF:000001">
    <property type="entry name" value="DNA ligase"/>
    <property type="match status" value="1"/>
</dbReference>
<dbReference type="Gene3D" id="6.20.10.30">
    <property type="match status" value="1"/>
</dbReference>
<dbReference type="Gene3D" id="1.10.150.20">
    <property type="entry name" value="5' to 3' exonuclease, C-terminal subdomain"/>
    <property type="match status" value="2"/>
</dbReference>
<dbReference type="Gene3D" id="3.40.50.10190">
    <property type="entry name" value="BRCT domain"/>
    <property type="match status" value="1"/>
</dbReference>
<dbReference type="Gene3D" id="3.30.470.30">
    <property type="entry name" value="DNA ligase/mRNA capping enzyme"/>
    <property type="match status" value="1"/>
</dbReference>
<dbReference type="Gene3D" id="1.10.287.610">
    <property type="entry name" value="Helix hairpin bin"/>
    <property type="match status" value="1"/>
</dbReference>
<dbReference type="Gene3D" id="2.40.50.140">
    <property type="entry name" value="Nucleic acid-binding proteins"/>
    <property type="match status" value="1"/>
</dbReference>
<dbReference type="HAMAP" id="MF_01588">
    <property type="entry name" value="DNA_ligase_A"/>
    <property type="match status" value="1"/>
</dbReference>
<dbReference type="InterPro" id="IPR001357">
    <property type="entry name" value="BRCT_dom"/>
</dbReference>
<dbReference type="InterPro" id="IPR036420">
    <property type="entry name" value="BRCT_dom_sf"/>
</dbReference>
<dbReference type="InterPro" id="IPR041663">
    <property type="entry name" value="DisA/LigA_HHH"/>
</dbReference>
<dbReference type="InterPro" id="IPR001679">
    <property type="entry name" value="DNA_ligase"/>
</dbReference>
<dbReference type="InterPro" id="IPR018239">
    <property type="entry name" value="DNA_ligase_AS"/>
</dbReference>
<dbReference type="InterPro" id="IPR033136">
    <property type="entry name" value="DNA_ligase_CS"/>
</dbReference>
<dbReference type="InterPro" id="IPR013839">
    <property type="entry name" value="DNAligase_adenylation"/>
</dbReference>
<dbReference type="InterPro" id="IPR013840">
    <property type="entry name" value="DNAligase_N"/>
</dbReference>
<dbReference type="InterPro" id="IPR003583">
    <property type="entry name" value="Hlx-hairpin-Hlx_DNA-bd_motif"/>
</dbReference>
<dbReference type="InterPro" id="IPR012340">
    <property type="entry name" value="NA-bd_OB-fold"/>
</dbReference>
<dbReference type="InterPro" id="IPR004150">
    <property type="entry name" value="NAD_DNA_ligase_OB"/>
</dbReference>
<dbReference type="InterPro" id="IPR010994">
    <property type="entry name" value="RuvA_2-like"/>
</dbReference>
<dbReference type="InterPro" id="IPR004149">
    <property type="entry name" value="Znf_DNAligase_C4"/>
</dbReference>
<dbReference type="NCBIfam" id="TIGR00575">
    <property type="entry name" value="dnlj"/>
    <property type="match status" value="1"/>
</dbReference>
<dbReference type="NCBIfam" id="NF005932">
    <property type="entry name" value="PRK07956.1"/>
    <property type="match status" value="1"/>
</dbReference>
<dbReference type="PANTHER" id="PTHR23389">
    <property type="entry name" value="CHROMOSOME TRANSMISSION FIDELITY FACTOR 18"/>
    <property type="match status" value="1"/>
</dbReference>
<dbReference type="PANTHER" id="PTHR23389:SF9">
    <property type="entry name" value="DNA LIGASE"/>
    <property type="match status" value="1"/>
</dbReference>
<dbReference type="Pfam" id="PF00533">
    <property type="entry name" value="BRCT"/>
    <property type="match status" value="1"/>
</dbReference>
<dbReference type="Pfam" id="PF01653">
    <property type="entry name" value="DNA_ligase_aden"/>
    <property type="match status" value="1"/>
</dbReference>
<dbReference type="Pfam" id="PF03120">
    <property type="entry name" value="DNA_ligase_OB"/>
    <property type="match status" value="1"/>
</dbReference>
<dbReference type="Pfam" id="PF03119">
    <property type="entry name" value="DNA_ligase_ZBD"/>
    <property type="match status" value="1"/>
</dbReference>
<dbReference type="Pfam" id="PF12826">
    <property type="entry name" value="HHH_2"/>
    <property type="match status" value="1"/>
</dbReference>
<dbReference type="PIRSF" id="PIRSF001604">
    <property type="entry name" value="LigA"/>
    <property type="match status" value="1"/>
</dbReference>
<dbReference type="SMART" id="SM00292">
    <property type="entry name" value="BRCT"/>
    <property type="match status" value="1"/>
</dbReference>
<dbReference type="SMART" id="SM00278">
    <property type="entry name" value="HhH1"/>
    <property type="match status" value="3"/>
</dbReference>
<dbReference type="SMART" id="SM00532">
    <property type="entry name" value="LIGANc"/>
    <property type="match status" value="1"/>
</dbReference>
<dbReference type="SUPFAM" id="SSF52113">
    <property type="entry name" value="BRCT domain"/>
    <property type="match status" value="1"/>
</dbReference>
<dbReference type="SUPFAM" id="SSF56091">
    <property type="entry name" value="DNA ligase/mRNA capping enzyme, catalytic domain"/>
    <property type="match status" value="1"/>
</dbReference>
<dbReference type="SUPFAM" id="SSF50249">
    <property type="entry name" value="Nucleic acid-binding proteins"/>
    <property type="match status" value="1"/>
</dbReference>
<dbReference type="SUPFAM" id="SSF47781">
    <property type="entry name" value="RuvA domain 2-like"/>
    <property type="match status" value="1"/>
</dbReference>
<dbReference type="PROSITE" id="PS50172">
    <property type="entry name" value="BRCT"/>
    <property type="match status" value="1"/>
</dbReference>
<dbReference type="PROSITE" id="PS01055">
    <property type="entry name" value="DNA_LIGASE_N1"/>
    <property type="match status" value="1"/>
</dbReference>
<dbReference type="PROSITE" id="PS01056">
    <property type="entry name" value="DNA_LIGASE_N2"/>
    <property type="match status" value="1"/>
</dbReference>